<accession>Q8WNR4</accession>
<reference key="1">
    <citation type="journal article" date="2001" name="Dev. Biol.">
        <title>The major subacrosomal occupant of bull spermatozoa is a novel histone H2B variant associated with the forming acrosome during spermiogenesis.</title>
        <authorList>
            <person name="Aul R.B."/>
            <person name="Oko R.J."/>
        </authorList>
    </citation>
    <scope>NUCLEOTIDE SEQUENCE [MRNA]</scope>
    <scope>PROTEIN SEQUENCE OF 2-17</scope>
    <scope>FUNCTION</scope>
    <scope>SUBCELLULAR LOCATION</scope>
    <scope>TISSUE SPECIFICITY</scope>
    <source>
        <tissue>Testis</tissue>
    </source>
</reference>
<reference key="2">
    <citation type="journal article" date="2001" name="Dev. Biol.">
        <authorList>
            <person name="Aul R.B."/>
            <person name="Oko R.J."/>
        </authorList>
    </citation>
    <scope>ERRATUM OF PUBMED:11784042</scope>
</reference>
<reference key="3">
    <citation type="submission" date="2005-10" db="EMBL/GenBank/DDBJ databases">
        <authorList>
            <consortium name="NIH - Mammalian Gene Collection (MGC) project"/>
        </authorList>
    </citation>
    <scope>NUCLEOTIDE SEQUENCE [LARGE SCALE MRNA]</scope>
    <source>
        <strain>Crossbred X Angus</strain>
        <tissue>Liver</tissue>
    </source>
</reference>
<name>H2BV_BOVIN</name>
<dbReference type="EMBL" id="AF315690">
    <property type="protein sequence ID" value="AAL66185.1"/>
    <property type="molecule type" value="mRNA"/>
</dbReference>
<dbReference type="EMBL" id="BC108210">
    <property type="protein sequence ID" value="AAI08211.1"/>
    <property type="molecule type" value="mRNA"/>
</dbReference>
<dbReference type="SMR" id="Q8WNR4"/>
<dbReference type="FunCoup" id="Q8WNR4">
    <property type="interactions" value="8"/>
</dbReference>
<dbReference type="STRING" id="9913.ENSBTAP00000016978"/>
<dbReference type="PaxDb" id="9913-ENSBTAP00000016978"/>
<dbReference type="Ensembl" id="ENSBTAT00000016978.5">
    <property type="protein sequence ID" value="ENSBTAP00000016978.4"/>
    <property type="gene ID" value="ENSBTAG00000012775.5"/>
</dbReference>
<dbReference type="KEGG" id="bta:404073"/>
<dbReference type="CTD" id="69382"/>
<dbReference type="VEuPathDB" id="HostDB:ENSBTAG00000012775"/>
<dbReference type="VGNC" id="VGNC:84128">
    <property type="gene designation" value="H2BL1"/>
</dbReference>
<dbReference type="eggNOG" id="KOG1744">
    <property type="taxonomic scope" value="Eukaryota"/>
</dbReference>
<dbReference type="GeneTree" id="ENSGT01110000267181"/>
<dbReference type="HOGENOM" id="CLU_075666_2_2_1"/>
<dbReference type="InParanoid" id="Q8WNR4"/>
<dbReference type="OMA" id="MYFRNRC"/>
<dbReference type="OrthoDB" id="9448092at2759"/>
<dbReference type="TreeFam" id="TF300212"/>
<dbReference type="Proteomes" id="UP000009136">
    <property type="component" value="Chromosome 20"/>
</dbReference>
<dbReference type="Bgee" id="ENSBTAG00000012775">
    <property type="expression patterns" value="Expressed in semen and 17 other cell types or tissues"/>
</dbReference>
<dbReference type="GO" id="GO:0005737">
    <property type="term" value="C:cytoplasm"/>
    <property type="evidence" value="ECO:0007669"/>
    <property type="project" value="UniProtKB-SubCell"/>
</dbReference>
<dbReference type="GO" id="GO:0000786">
    <property type="term" value="C:nucleosome"/>
    <property type="evidence" value="ECO:0007669"/>
    <property type="project" value="InterPro"/>
</dbReference>
<dbReference type="GO" id="GO:0005634">
    <property type="term" value="C:nucleus"/>
    <property type="evidence" value="ECO:0007669"/>
    <property type="project" value="Ensembl"/>
</dbReference>
<dbReference type="GO" id="GO:0003677">
    <property type="term" value="F:DNA binding"/>
    <property type="evidence" value="ECO:0000318"/>
    <property type="project" value="GO_Central"/>
</dbReference>
<dbReference type="GO" id="GO:0046982">
    <property type="term" value="F:protein heterodimerization activity"/>
    <property type="evidence" value="ECO:0007669"/>
    <property type="project" value="InterPro"/>
</dbReference>
<dbReference type="GO" id="GO:0030527">
    <property type="term" value="F:structural constituent of chromatin"/>
    <property type="evidence" value="ECO:0007669"/>
    <property type="project" value="InterPro"/>
</dbReference>
<dbReference type="CDD" id="cd22910">
    <property type="entry name" value="HFD_H2B"/>
    <property type="match status" value="1"/>
</dbReference>
<dbReference type="FunFam" id="1.10.20.10:FF:000043">
    <property type="entry name" value="Histone H2B"/>
    <property type="match status" value="1"/>
</dbReference>
<dbReference type="Gene3D" id="1.10.20.10">
    <property type="entry name" value="Histone, subunit A"/>
    <property type="match status" value="1"/>
</dbReference>
<dbReference type="InterPro" id="IPR009072">
    <property type="entry name" value="Histone-fold"/>
</dbReference>
<dbReference type="InterPro" id="IPR007125">
    <property type="entry name" value="Histone_H2A/H2B/H3"/>
</dbReference>
<dbReference type="InterPro" id="IPR000558">
    <property type="entry name" value="Histone_H2B"/>
</dbReference>
<dbReference type="PANTHER" id="PTHR23428">
    <property type="entry name" value="HISTONE H2B"/>
    <property type="match status" value="1"/>
</dbReference>
<dbReference type="Pfam" id="PF00125">
    <property type="entry name" value="Histone"/>
    <property type="match status" value="1"/>
</dbReference>
<dbReference type="PRINTS" id="PR00621">
    <property type="entry name" value="HISTONEH2B"/>
</dbReference>
<dbReference type="SMART" id="SM00427">
    <property type="entry name" value="H2B"/>
    <property type="match status" value="1"/>
</dbReference>
<dbReference type="SUPFAM" id="SSF47113">
    <property type="entry name" value="Histone-fold"/>
    <property type="match status" value="1"/>
</dbReference>
<sequence length="122" mass="14224">MARNVTKRNKRCRGHQKAIYKKKSHSSSESGLRNYSLYINRVLKEVVPQKGISSRTIDIINTMINDMFERISTEACNLMYYRKRCTLTPEDIEKAVYLLLPEKLAKYAVAFGKEAVQRYVRS</sequence>
<organism>
    <name type="scientific">Bos taurus</name>
    <name type="common">Bovine</name>
    <dbReference type="NCBI Taxonomy" id="9913"/>
    <lineage>
        <taxon>Eukaryota</taxon>
        <taxon>Metazoa</taxon>
        <taxon>Chordata</taxon>
        <taxon>Craniata</taxon>
        <taxon>Vertebrata</taxon>
        <taxon>Euteleostomi</taxon>
        <taxon>Mammalia</taxon>
        <taxon>Eutheria</taxon>
        <taxon>Laurasiatheria</taxon>
        <taxon>Artiodactyla</taxon>
        <taxon>Ruminantia</taxon>
        <taxon>Pecora</taxon>
        <taxon>Bovidae</taxon>
        <taxon>Bovinae</taxon>
        <taxon>Bos</taxon>
    </lineage>
</organism>
<protein>
    <recommendedName>
        <fullName>Histone H2B subacrosomal variant</fullName>
    </recommendedName>
    <alternativeName>
        <fullName>SubH2Bv</fullName>
    </alternativeName>
</protein>
<keyword id="KW-0963">Cytoplasm</keyword>
<keyword id="KW-0903">Direct protein sequencing</keyword>
<keyword id="KW-1185">Reference proteome</keyword>
<comment type="function">
    <text evidence="2">May act as an acrosome-nuclear docking protein in sperm.</text>
</comment>
<comment type="subcellular location">
    <subcellularLocation>
        <location evidence="2">Cytoplasm</location>
    </subcellularLocation>
    <text>Subacrosomal region. Does not localize in nucleus.</text>
</comment>
<comment type="tissue specificity">
    <text evidence="2">Testis-specific. Restricted to the spermatid population of seminiferous epithelium. Not present in Sertoli cells, spermatogonia, spermatocytes or cells of the interstitial tissue (at protein level).</text>
</comment>
<comment type="similarity">
    <text evidence="3">Belongs to the histone H2B family.</text>
</comment>
<feature type="initiator methionine" description="Removed" evidence="2">
    <location>
        <position position="1"/>
    </location>
</feature>
<feature type="chain" id="PRO_0000244823" description="Histone H2B subacrosomal variant">
    <location>
        <begin position="2"/>
        <end position="122"/>
    </location>
</feature>
<feature type="region of interest" description="Disordered" evidence="1">
    <location>
        <begin position="1"/>
        <end position="30"/>
    </location>
</feature>
<feature type="compositionally biased region" description="Basic residues" evidence="1">
    <location>
        <begin position="1"/>
        <end position="25"/>
    </location>
</feature>
<proteinExistence type="evidence at protein level"/>
<evidence type="ECO:0000256" key="1">
    <source>
        <dbReference type="SAM" id="MobiDB-lite"/>
    </source>
</evidence>
<evidence type="ECO:0000269" key="2">
    <source>
    </source>
</evidence>
<evidence type="ECO:0000305" key="3"/>
<gene>
    <name type="primary">SUBH2BV</name>
</gene>